<organism>
    <name type="scientific">Staphylococcus aureus (strain MW2)</name>
    <dbReference type="NCBI Taxonomy" id="196620"/>
    <lineage>
        <taxon>Bacteria</taxon>
        <taxon>Bacillati</taxon>
        <taxon>Bacillota</taxon>
        <taxon>Bacilli</taxon>
        <taxon>Bacillales</taxon>
        <taxon>Staphylococcaceae</taxon>
        <taxon>Staphylococcus</taxon>
    </lineage>
</organism>
<reference key="1">
    <citation type="journal article" date="2002" name="Lancet">
        <title>Genome and virulence determinants of high virulence community-acquired MRSA.</title>
        <authorList>
            <person name="Baba T."/>
            <person name="Takeuchi F."/>
            <person name="Kuroda M."/>
            <person name="Yuzawa H."/>
            <person name="Aoki K."/>
            <person name="Oguchi A."/>
            <person name="Nagai Y."/>
            <person name="Iwama N."/>
            <person name="Asano K."/>
            <person name="Naimi T."/>
            <person name="Kuroda H."/>
            <person name="Cui L."/>
            <person name="Yamamoto K."/>
            <person name="Hiramatsu K."/>
        </authorList>
    </citation>
    <scope>NUCLEOTIDE SEQUENCE [LARGE SCALE GENOMIC DNA]</scope>
    <source>
        <strain>MW2</strain>
    </source>
</reference>
<keyword id="KW-0963">Cytoplasm</keyword>
<keyword id="KW-0274">FAD</keyword>
<keyword id="KW-0285">Flavoprotein</keyword>
<keyword id="KW-0520">NAD</keyword>
<keyword id="KW-0819">tRNA processing</keyword>
<comment type="function">
    <text evidence="1">NAD-binding protein involved in the addition of a carboxymethylaminomethyl (cmnm) group at the wobble position (U34) of certain tRNAs, forming tRNA-cmnm(5)s(2)U34.</text>
</comment>
<comment type="cofactor">
    <cofactor evidence="1">
        <name>FAD</name>
        <dbReference type="ChEBI" id="CHEBI:57692"/>
    </cofactor>
</comment>
<comment type="subunit">
    <text evidence="1">Homodimer. Heterotetramer of two MnmE and two MnmG subunits.</text>
</comment>
<comment type="subcellular location">
    <subcellularLocation>
        <location evidence="1">Cytoplasm</location>
    </subcellularLocation>
</comment>
<comment type="similarity">
    <text evidence="1">Belongs to the MnmG family.</text>
</comment>
<protein>
    <recommendedName>
        <fullName evidence="1">tRNA uridine 5-carboxymethylaminomethyl modification enzyme MnmG</fullName>
    </recommendedName>
    <alternativeName>
        <fullName evidence="1">Glucose-inhibited division protein A</fullName>
    </alternativeName>
</protein>
<evidence type="ECO:0000255" key="1">
    <source>
        <dbReference type="HAMAP-Rule" id="MF_00129"/>
    </source>
</evidence>
<feature type="chain" id="PRO_0000117179" description="tRNA uridine 5-carboxymethylaminomethyl modification enzyme MnmG">
    <location>
        <begin position="1"/>
        <end position="625"/>
    </location>
</feature>
<feature type="binding site" evidence="1">
    <location>
        <begin position="11"/>
        <end position="16"/>
    </location>
    <ligand>
        <name>FAD</name>
        <dbReference type="ChEBI" id="CHEBI:57692"/>
    </ligand>
</feature>
<feature type="binding site" evidence="1">
    <location>
        <position position="123"/>
    </location>
    <ligand>
        <name>FAD</name>
        <dbReference type="ChEBI" id="CHEBI:57692"/>
    </ligand>
</feature>
<feature type="binding site" evidence="1">
    <location>
        <position position="178"/>
    </location>
    <ligand>
        <name>FAD</name>
        <dbReference type="ChEBI" id="CHEBI:57692"/>
    </ligand>
</feature>
<feature type="binding site" evidence="1">
    <location>
        <begin position="270"/>
        <end position="284"/>
    </location>
    <ligand>
        <name>NAD(+)</name>
        <dbReference type="ChEBI" id="CHEBI:57540"/>
    </ligand>
</feature>
<feature type="binding site" evidence="1">
    <location>
        <position position="367"/>
    </location>
    <ligand>
        <name>FAD</name>
        <dbReference type="ChEBI" id="CHEBI:57692"/>
    </ligand>
</feature>
<accession>P64231</accession>
<accession>Q99QT4</accession>
<proteinExistence type="inferred from homology"/>
<gene>
    <name evidence="1" type="primary">mnmG</name>
    <name evidence="1" type="synonym">gidA</name>
    <name type="ordered locus">MW2629</name>
</gene>
<name>MNMG_STAAW</name>
<sequence length="625" mass="70116">MVQEYDVIVIGAGHAGVEAGLASARRGAKTLMLTINLDNIAFMPCNPSVGGPAKGIVVREIDALGGQMAKTIDKTHIQMRMLNTGKGPAVRALRAQADKVLYQQEMKRVIEDEENLHIMQGMVDELIIEDNEVKGVRTNIGTEYLSKAVIITTGTFLRGEIILGNMKYSSGPNHQLPSITLSDNLRELGFDIVRFKTGTPPRVNSKTIDYSKTEIQPGDDVGRAFSFETTEYILDQLPCWLTYTNAETHKVIDDNLHLSAMYSGMIKGTGPRYCPSIEDKFVRFNDKPRHQLFLEPEGRNTNEVYVQGLSTSLPEHVQRQMLETIPGLEKADMMRAGYAIEYDAIVPTQLWPTLETKMIKNLYTAGQINGTSGYEEAAGQGLMAGINAAGKVLNTGEKILSRSDAYIGVLIDDLVTKGTNEPYRLLTSRAEYRLLLRHDNADLRLTDMGYELGMISEERYARFNEKRQQIDAEIKRLSDIRIKPNEHTQAIIEQHGGSRLKDGILAIDLLRRPEMTYDIILEILEEEHQLNADVEEQVEIQTKYEGYINKSLQQVEKVKRMEEKKIPEDLDYSKIDSLATEAREKLSEVKPLNIAQASRISGVNPADISILLIYLEQGKLQRVSD</sequence>
<dbReference type="EMBL" id="BA000033">
    <property type="protein sequence ID" value="BAB96494.1"/>
    <property type="molecule type" value="Genomic_DNA"/>
</dbReference>
<dbReference type="RefSeq" id="WP_000249657.1">
    <property type="nucleotide sequence ID" value="NC_003923.1"/>
</dbReference>
<dbReference type="SMR" id="P64231"/>
<dbReference type="KEGG" id="sam:MW2629"/>
<dbReference type="HOGENOM" id="CLU_007831_2_2_9"/>
<dbReference type="GO" id="GO:0005829">
    <property type="term" value="C:cytosol"/>
    <property type="evidence" value="ECO:0007669"/>
    <property type="project" value="TreeGrafter"/>
</dbReference>
<dbReference type="GO" id="GO:0050660">
    <property type="term" value="F:flavin adenine dinucleotide binding"/>
    <property type="evidence" value="ECO:0007669"/>
    <property type="project" value="UniProtKB-UniRule"/>
</dbReference>
<dbReference type="GO" id="GO:0030488">
    <property type="term" value="P:tRNA methylation"/>
    <property type="evidence" value="ECO:0007669"/>
    <property type="project" value="TreeGrafter"/>
</dbReference>
<dbReference type="GO" id="GO:0002098">
    <property type="term" value="P:tRNA wobble uridine modification"/>
    <property type="evidence" value="ECO:0007669"/>
    <property type="project" value="InterPro"/>
</dbReference>
<dbReference type="FunFam" id="1.10.10.1800:FF:000001">
    <property type="entry name" value="tRNA uridine 5-carboxymethylaminomethyl modification enzyme MnmG"/>
    <property type="match status" value="1"/>
</dbReference>
<dbReference type="FunFam" id="1.10.150.570:FF:000001">
    <property type="entry name" value="tRNA uridine 5-carboxymethylaminomethyl modification enzyme MnmG"/>
    <property type="match status" value="1"/>
</dbReference>
<dbReference type="FunFam" id="3.50.50.60:FF:000002">
    <property type="entry name" value="tRNA uridine 5-carboxymethylaminomethyl modification enzyme MnmG"/>
    <property type="match status" value="1"/>
</dbReference>
<dbReference type="FunFam" id="3.50.50.60:FF:000063">
    <property type="entry name" value="tRNA uridine 5-carboxymethylaminomethyl modification enzyme MnmG"/>
    <property type="match status" value="1"/>
</dbReference>
<dbReference type="Gene3D" id="3.50.50.60">
    <property type="entry name" value="FAD/NAD(P)-binding domain"/>
    <property type="match status" value="2"/>
</dbReference>
<dbReference type="Gene3D" id="1.10.150.570">
    <property type="entry name" value="GidA associated domain, C-terminal subdomain"/>
    <property type="match status" value="1"/>
</dbReference>
<dbReference type="Gene3D" id="1.10.10.1800">
    <property type="entry name" value="tRNA uridine 5-carboxymethylaminomethyl modification enzyme MnmG/GidA"/>
    <property type="match status" value="1"/>
</dbReference>
<dbReference type="HAMAP" id="MF_00129">
    <property type="entry name" value="MnmG_GidA"/>
    <property type="match status" value="1"/>
</dbReference>
<dbReference type="InterPro" id="IPR036188">
    <property type="entry name" value="FAD/NAD-bd_sf"/>
</dbReference>
<dbReference type="InterPro" id="IPR049312">
    <property type="entry name" value="GIDA_C_N"/>
</dbReference>
<dbReference type="InterPro" id="IPR004416">
    <property type="entry name" value="MnmG"/>
</dbReference>
<dbReference type="InterPro" id="IPR002218">
    <property type="entry name" value="MnmG-rel"/>
</dbReference>
<dbReference type="InterPro" id="IPR020595">
    <property type="entry name" value="MnmG-rel_CS"/>
</dbReference>
<dbReference type="InterPro" id="IPR026904">
    <property type="entry name" value="MnmG_C"/>
</dbReference>
<dbReference type="InterPro" id="IPR047001">
    <property type="entry name" value="MnmG_C_subdom"/>
</dbReference>
<dbReference type="InterPro" id="IPR044920">
    <property type="entry name" value="MnmG_C_subdom_sf"/>
</dbReference>
<dbReference type="InterPro" id="IPR040131">
    <property type="entry name" value="MnmG_N"/>
</dbReference>
<dbReference type="NCBIfam" id="TIGR00136">
    <property type="entry name" value="mnmG_gidA"/>
    <property type="match status" value="1"/>
</dbReference>
<dbReference type="PANTHER" id="PTHR11806">
    <property type="entry name" value="GLUCOSE INHIBITED DIVISION PROTEIN A"/>
    <property type="match status" value="1"/>
</dbReference>
<dbReference type="PANTHER" id="PTHR11806:SF0">
    <property type="entry name" value="PROTEIN MTO1 HOMOLOG, MITOCHONDRIAL"/>
    <property type="match status" value="1"/>
</dbReference>
<dbReference type="Pfam" id="PF01134">
    <property type="entry name" value="GIDA"/>
    <property type="match status" value="1"/>
</dbReference>
<dbReference type="Pfam" id="PF21680">
    <property type="entry name" value="GIDA_C_1st"/>
    <property type="match status" value="1"/>
</dbReference>
<dbReference type="Pfam" id="PF13932">
    <property type="entry name" value="SAM_GIDA_C"/>
    <property type="match status" value="1"/>
</dbReference>
<dbReference type="PRINTS" id="PR00411">
    <property type="entry name" value="PNDRDTASEI"/>
</dbReference>
<dbReference type="SMART" id="SM01228">
    <property type="entry name" value="GIDA_assoc_3"/>
    <property type="match status" value="1"/>
</dbReference>
<dbReference type="SUPFAM" id="SSF51905">
    <property type="entry name" value="FAD/NAD(P)-binding domain"/>
    <property type="match status" value="1"/>
</dbReference>
<dbReference type="PROSITE" id="PS01280">
    <property type="entry name" value="GIDA_1"/>
    <property type="match status" value="1"/>
</dbReference>
<dbReference type="PROSITE" id="PS01281">
    <property type="entry name" value="GIDA_2"/>
    <property type="match status" value="1"/>
</dbReference>